<organism>
    <name type="scientific">Homo sapiens</name>
    <name type="common">Human</name>
    <dbReference type="NCBI Taxonomy" id="9606"/>
    <lineage>
        <taxon>Eukaryota</taxon>
        <taxon>Metazoa</taxon>
        <taxon>Chordata</taxon>
        <taxon>Craniata</taxon>
        <taxon>Vertebrata</taxon>
        <taxon>Euteleostomi</taxon>
        <taxon>Mammalia</taxon>
        <taxon>Eutheria</taxon>
        <taxon>Euarchontoglires</taxon>
        <taxon>Primates</taxon>
        <taxon>Haplorrhini</taxon>
        <taxon>Catarrhini</taxon>
        <taxon>Hominidae</taxon>
        <taxon>Homo</taxon>
    </lineage>
</organism>
<keyword id="KW-0025">Alternative splicing</keyword>
<keyword id="KW-0175">Coiled coil</keyword>
<keyword id="KW-1267">Proteomics identification</keyword>
<keyword id="KW-1185">Reference proteome</keyword>
<sequence length="622" mass="67721">MDSHSGEPALLPCGTCDMVFRSSALLATHTQRFCIGHPTQEMTFGAQASVATEPQRAAVVPQEHQGVPQEPQGLPDQQASRSALKRLTEEVQWLRLSLQEMRPWITEVPRVFAGPWTRSEARPQSPMSEAVGSPSERLRALFRTRARRVAEMEAQSRALQLRGEELSRRLQVVACTRGGMSRLFGLEQEIRELQAEAGRTRGALEVLGARIQELQAEPGNPLSSRREAELYSPVQKANPGTLAAEIRALREAYIRDGGRDPGVLGQIWQLQVEASALELQRSQTRRGRAGATSGELPVVEAENRRLEAEILALQMQRGRAPLGPQDLRLLGDASLQPKGRRDPPLLPPPVAPPLPPLPGFSEPQLPGTMTRNLGLDSHFLLPTSDMLGPAPYDPGAGLVIFYDFLRGLEASWIWVQLRTGLARDGRDTGRTTALPPALCLPPPPAPGPMGNCAILASRQPVPRLPPSSSVSLVCELQVWQGLAWARAPQPKAWVSLGLFDQDQRVLSGRWRLPLRALPLDPSLSLGQLNGIPQAGQAELFLRLVNARDAAVQTLAEINPASVHEYQYPPPVSSTSSLEASFLTPAVGFADPPPRTEEPLSGVKDRDEGLGPHHSSDLPPVSF</sequence>
<proteinExistence type="evidence at protein level"/>
<reference key="1">
    <citation type="journal article" date="2004" name="Nat. Genet.">
        <title>Complete sequencing and characterization of 21,243 full-length human cDNAs.</title>
        <authorList>
            <person name="Ota T."/>
            <person name="Suzuki Y."/>
            <person name="Nishikawa T."/>
            <person name="Otsuki T."/>
            <person name="Sugiyama T."/>
            <person name="Irie R."/>
            <person name="Wakamatsu A."/>
            <person name="Hayashi K."/>
            <person name="Sato H."/>
            <person name="Nagai K."/>
            <person name="Kimura K."/>
            <person name="Makita H."/>
            <person name="Sekine M."/>
            <person name="Obayashi M."/>
            <person name="Nishi T."/>
            <person name="Shibahara T."/>
            <person name="Tanaka T."/>
            <person name="Ishii S."/>
            <person name="Yamamoto J."/>
            <person name="Saito K."/>
            <person name="Kawai Y."/>
            <person name="Isono Y."/>
            <person name="Nakamura Y."/>
            <person name="Nagahari K."/>
            <person name="Murakami K."/>
            <person name="Yasuda T."/>
            <person name="Iwayanagi T."/>
            <person name="Wagatsuma M."/>
            <person name="Shiratori A."/>
            <person name="Sudo H."/>
            <person name="Hosoiri T."/>
            <person name="Kaku Y."/>
            <person name="Kodaira H."/>
            <person name="Kondo H."/>
            <person name="Sugawara M."/>
            <person name="Takahashi M."/>
            <person name="Kanda K."/>
            <person name="Yokoi T."/>
            <person name="Furuya T."/>
            <person name="Kikkawa E."/>
            <person name="Omura Y."/>
            <person name="Abe K."/>
            <person name="Kamihara K."/>
            <person name="Katsuta N."/>
            <person name="Sato K."/>
            <person name="Tanikawa M."/>
            <person name="Yamazaki M."/>
            <person name="Ninomiya K."/>
            <person name="Ishibashi T."/>
            <person name="Yamashita H."/>
            <person name="Murakawa K."/>
            <person name="Fujimori K."/>
            <person name="Tanai H."/>
            <person name="Kimata M."/>
            <person name="Watanabe M."/>
            <person name="Hiraoka S."/>
            <person name="Chiba Y."/>
            <person name="Ishida S."/>
            <person name="Ono Y."/>
            <person name="Takiguchi S."/>
            <person name="Watanabe S."/>
            <person name="Yosida M."/>
            <person name="Hotuta T."/>
            <person name="Kusano J."/>
            <person name="Kanehori K."/>
            <person name="Takahashi-Fujii A."/>
            <person name="Hara H."/>
            <person name="Tanase T.-O."/>
            <person name="Nomura Y."/>
            <person name="Togiya S."/>
            <person name="Komai F."/>
            <person name="Hara R."/>
            <person name="Takeuchi K."/>
            <person name="Arita M."/>
            <person name="Imose N."/>
            <person name="Musashino K."/>
            <person name="Yuuki H."/>
            <person name="Oshima A."/>
            <person name="Sasaki N."/>
            <person name="Aotsuka S."/>
            <person name="Yoshikawa Y."/>
            <person name="Matsunawa H."/>
            <person name="Ichihara T."/>
            <person name="Shiohata N."/>
            <person name="Sano S."/>
            <person name="Moriya S."/>
            <person name="Momiyama H."/>
            <person name="Satoh N."/>
            <person name="Takami S."/>
            <person name="Terashima Y."/>
            <person name="Suzuki O."/>
            <person name="Nakagawa S."/>
            <person name="Senoh A."/>
            <person name="Mizoguchi H."/>
            <person name="Goto Y."/>
            <person name="Shimizu F."/>
            <person name="Wakebe H."/>
            <person name="Hishigaki H."/>
            <person name="Watanabe T."/>
            <person name="Sugiyama A."/>
            <person name="Takemoto M."/>
            <person name="Kawakami B."/>
            <person name="Yamazaki M."/>
            <person name="Watanabe K."/>
            <person name="Kumagai A."/>
            <person name="Itakura S."/>
            <person name="Fukuzumi Y."/>
            <person name="Fujimori Y."/>
            <person name="Komiyama M."/>
            <person name="Tashiro H."/>
            <person name="Tanigami A."/>
            <person name="Fujiwara T."/>
            <person name="Ono T."/>
            <person name="Yamada K."/>
            <person name="Fujii Y."/>
            <person name="Ozaki K."/>
            <person name="Hirao M."/>
            <person name="Ohmori Y."/>
            <person name="Kawabata A."/>
            <person name="Hikiji T."/>
            <person name="Kobatake N."/>
            <person name="Inagaki H."/>
            <person name="Ikema Y."/>
            <person name="Okamoto S."/>
            <person name="Okitani R."/>
            <person name="Kawakami T."/>
            <person name="Noguchi S."/>
            <person name="Itoh T."/>
            <person name="Shigeta K."/>
            <person name="Senba T."/>
            <person name="Matsumura K."/>
            <person name="Nakajima Y."/>
            <person name="Mizuno T."/>
            <person name="Morinaga M."/>
            <person name="Sasaki M."/>
            <person name="Togashi T."/>
            <person name="Oyama M."/>
            <person name="Hata H."/>
            <person name="Watanabe M."/>
            <person name="Komatsu T."/>
            <person name="Mizushima-Sugano J."/>
            <person name="Satoh T."/>
            <person name="Shirai Y."/>
            <person name="Takahashi Y."/>
            <person name="Nakagawa K."/>
            <person name="Okumura K."/>
            <person name="Nagase T."/>
            <person name="Nomura N."/>
            <person name="Kikuchi H."/>
            <person name="Masuho Y."/>
            <person name="Yamashita R."/>
            <person name="Nakai K."/>
            <person name="Yada T."/>
            <person name="Nakamura Y."/>
            <person name="Ohara O."/>
            <person name="Isogai T."/>
            <person name="Sugano S."/>
        </authorList>
    </citation>
    <scope>NUCLEOTIDE SEQUENCE [LARGE SCALE MRNA] (ISOFORMS 1 AND 2)</scope>
    <scope>VARIANTS LEU-353 AND ASN-580</scope>
    <source>
        <tissue>Trachea</tissue>
    </source>
</reference>
<reference key="2">
    <citation type="journal article" date="2006" name="Nature">
        <title>The DNA sequence and biological annotation of human chromosome 1.</title>
        <authorList>
            <person name="Gregory S.G."/>
            <person name="Barlow K.F."/>
            <person name="McLay K.E."/>
            <person name="Kaul R."/>
            <person name="Swarbreck D."/>
            <person name="Dunham A."/>
            <person name="Scott C.E."/>
            <person name="Howe K.L."/>
            <person name="Woodfine K."/>
            <person name="Spencer C.C.A."/>
            <person name="Jones M.C."/>
            <person name="Gillson C."/>
            <person name="Searle S."/>
            <person name="Zhou Y."/>
            <person name="Kokocinski F."/>
            <person name="McDonald L."/>
            <person name="Evans R."/>
            <person name="Phillips K."/>
            <person name="Atkinson A."/>
            <person name="Cooper R."/>
            <person name="Jones C."/>
            <person name="Hall R.E."/>
            <person name="Andrews T.D."/>
            <person name="Lloyd C."/>
            <person name="Ainscough R."/>
            <person name="Almeida J.P."/>
            <person name="Ambrose K.D."/>
            <person name="Anderson F."/>
            <person name="Andrew R.W."/>
            <person name="Ashwell R.I.S."/>
            <person name="Aubin K."/>
            <person name="Babbage A.K."/>
            <person name="Bagguley C.L."/>
            <person name="Bailey J."/>
            <person name="Beasley H."/>
            <person name="Bethel G."/>
            <person name="Bird C.P."/>
            <person name="Bray-Allen S."/>
            <person name="Brown J.Y."/>
            <person name="Brown A.J."/>
            <person name="Buckley D."/>
            <person name="Burton J."/>
            <person name="Bye J."/>
            <person name="Carder C."/>
            <person name="Chapman J.C."/>
            <person name="Clark S.Y."/>
            <person name="Clarke G."/>
            <person name="Clee C."/>
            <person name="Cobley V."/>
            <person name="Collier R.E."/>
            <person name="Corby N."/>
            <person name="Coville G.J."/>
            <person name="Davies J."/>
            <person name="Deadman R."/>
            <person name="Dunn M."/>
            <person name="Earthrowl M."/>
            <person name="Ellington A.G."/>
            <person name="Errington H."/>
            <person name="Frankish A."/>
            <person name="Frankland J."/>
            <person name="French L."/>
            <person name="Garner P."/>
            <person name="Garnett J."/>
            <person name="Gay L."/>
            <person name="Ghori M.R.J."/>
            <person name="Gibson R."/>
            <person name="Gilby L.M."/>
            <person name="Gillett W."/>
            <person name="Glithero R.J."/>
            <person name="Grafham D.V."/>
            <person name="Griffiths C."/>
            <person name="Griffiths-Jones S."/>
            <person name="Grocock R."/>
            <person name="Hammond S."/>
            <person name="Harrison E.S.I."/>
            <person name="Hart E."/>
            <person name="Haugen E."/>
            <person name="Heath P.D."/>
            <person name="Holmes S."/>
            <person name="Holt K."/>
            <person name="Howden P.J."/>
            <person name="Hunt A.R."/>
            <person name="Hunt S.E."/>
            <person name="Hunter G."/>
            <person name="Isherwood J."/>
            <person name="James R."/>
            <person name="Johnson C."/>
            <person name="Johnson D."/>
            <person name="Joy A."/>
            <person name="Kay M."/>
            <person name="Kershaw J.K."/>
            <person name="Kibukawa M."/>
            <person name="Kimberley A.M."/>
            <person name="King A."/>
            <person name="Knights A.J."/>
            <person name="Lad H."/>
            <person name="Laird G."/>
            <person name="Lawlor S."/>
            <person name="Leongamornlert D.A."/>
            <person name="Lloyd D.M."/>
            <person name="Loveland J."/>
            <person name="Lovell J."/>
            <person name="Lush M.J."/>
            <person name="Lyne R."/>
            <person name="Martin S."/>
            <person name="Mashreghi-Mohammadi M."/>
            <person name="Matthews L."/>
            <person name="Matthews N.S.W."/>
            <person name="McLaren S."/>
            <person name="Milne S."/>
            <person name="Mistry S."/>
            <person name="Moore M.J.F."/>
            <person name="Nickerson T."/>
            <person name="O'Dell C.N."/>
            <person name="Oliver K."/>
            <person name="Palmeiri A."/>
            <person name="Palmer S.A."/>
            <person name="Parker A."/>
            <person name="Patel D."/>
            <person name="Pearce A.V."/>
            <person name="Peck A.I."/>
            <person name="Pelan S."/>
            <person name="Phelps K."/>
            <person name="Phillimore B.J."/>
            <person name="Plumb R."/>
            <person name="Rajan J."/>
            <person name="Raymond C."/>
            <person name="Rouse G."/>
            <person name="Saenphimmachak C."/>
            <person name="Sehra H.K."/>
            <person name="Sheridan E."/>
            <person name="Shownkeen R."/>
            <person name="Sims S."/>
            <person name="Skuce C.D."/>
            <person name="Smith M."/>
            <person name="Steward C."/>
            <person name="Subramanian S."/>
            <person name="Sycamore N."/>
            <person name="Tracey A."/>
            <person name="Tromans A."/>
            <person name="Van Helmond Z."/>
            <person name="Wall M."/>
            <person name="Wallis J.M."/>
            <person name="White S."/>
            <person name="Whitehead S.L."/>
            <person name="Wilkinson J.E."/>
            <person name="Willey D.L."/>
            <person name="Williams H."/>
            <person name="Wilming L."/>
            <person name="Wray P.W."/>
            <person name="Wu Z."/>
            <person name="Coulson A."/>
            <person name="Vaudin M."/>
            <person name="Sulston J.E."/>
            <person name="Durbin R.M."/>
            <person name="Hubbard T."/>
            <person name="Wooster R."/>
            <person name="Dunham I."/>
            <person name="Carter N.P."/>
            <person name="McVean G."/>
            <person name="Ross M.T."/>
            <person name="Harrow J."/>
            <person name="Olson M.V."/>
            <person name="Beck S."/>
            <person name="Rogers J."/>
            <person name="Bentley D.R."/>
        </authorList>
    </citation>
    <scope>NUCLEOTIDE SEQUENCE [LARGE SCALE GENOMIC DNA]</scope>
</reference>
<reference key="3">
    <citation type="journal article" date="2004" name="Genome Res.">
        <title>The status, quality, and expansion of the NIH full-length cDNA project: the Mammalian Gene Collection (MGC).</title>
        <authorList>
            <consortium name="The MGC Project Team"/>
        </authorList>
    </citation>
    <scope>NUCLEOTIDE SEQUENCE [LARGE SCALE MRNA] (ISOFORMS 3 AND 4)</scope>
    <scope>VARIANT ASN-580</scope>
    <source>
        <tissue>Brain</tissue>
    </source>
</reference>
<name>CCD17_HUMAN</name>
<protein>
    <recommendedName>
        <fullName>Coiled-coil domain-containing protein 17</fullName>
    </recommendedName>
</protein>
<gene>
    <name type="primary">CCDC17</name>
</gene>
<feature type="chain" id="PRO_0000302852" description="Coiled-coil domain-containing protein 17">
    <location>
        <begin position="1"/>
        <end position="622"/>
    </location>
</feature>
<feature type="region of interest" description="Disordered" evidence="2">
    <location>
        <begin position="334"/>
        <end position="356"/>
    </location>
</feature>
<feature type="region of interest" description="Disordered" evidence="2">
    <location>
        <begin position="584"/>
        <end position="622"/>
    </location>
</feature>
<feature type="coiled-coil region" evidence="1">
    <location>
        <begin position="81"/>
        <end position="102"/>
    </location>
</feature>
<feature type="coiled-coil region" evidence="1">
    <location>
        <begin position="146"/>
        <end position="207"/>
    </location>
</feature>
<feature type="coiled-coil region" evidence="1">
    <location>
        <begin position="294"/>
        <end position="320"/>
    </location>
</feature>
<feature type="compositionally biased region" description="Pro residues" evidence="2">
    <location>
        <begin position="344"/>
        <end position="356"/>
    </location>
</feature>
<feature type="compositionally biased region" description="Basic and acidic residues" evidence="2">
    <location>
        <begin position="593"/>
        <end position="615"/>
    </location>
</feature>
<feature type="splice variant" id="VSP_039651" description="In isoform 3." evidence="6">
    <location>
        <begin position="1"/>
        <end position="179"/>
    </location>
</feature>
<feature type="splice variant" id="VSP_039652" description="In isoform 4." evidence="6">
    <location>
        <begin position="60"/>
        <end position="571"/>
    </location>
</feature>
<feature type="splice variant" id="VSP_039653" description="In isoform 2." evidence="5">
    <location>
        <begin position="91"/>
        <end position="99"/>
    </location>
</feature>
<feature type="sequence variant" id="VAR_034976" description="In dbSNP:rs3014242." evidence="3">
    <original>P</original>
    <variation>L</variation>
    <location>
        <position position="353"/>
    </location>
</feature>
<feature type="sequence variant" id="VAR_059599" description="In dbSNP:rs17410855.">
    <original>V</original>
    <variation>I</variation>
    <location>
        <position position="470"/>
    </location>
</feature>
<feature type="sequence variant" id="VAR_034977" description="In dbSNP:rs2297654.">
    <original>I</original>
    <variation>V</variation>
    <location>
        <position position="557"/>
    </location>
</feature>
<feature type="sequence variant" id="VAR_063516" description="In dbSNP:rs3014246." evidence="3 4">
    <original>S</original>
    <variation>N</variation>
    <location>
        <position position="580"/>
    </location>
</feature>
<feature type="sequence conflict" description="In Ref. 1; BAB71539." evidence="7" ref="1">
    <original>E</original>
    <variation>V</variation>
    <location>
        <position position="41"/>
    </location>
</feature>
<feature type="sequence conflict" description="In Ref. 1; BAG64867." evidence="7" ref="1">
    <original>L</original>
    <variation>P</variation>
    <location>
        <position position="74"/>
    </location>
</feature>
<feature type="sequence conflict" description="In Ref. 3; AAH29888." evidence="7" ref="3">
    <original>L</original>
    <variation>E</variation>
    <location>
        <position position="417"/>
    </location>
</feature>
<feature type="sequence conflict" description="In Ref. 3; AAH29888." evidence="7" ref="3">
    <original>GL</original>
    <variation>AS</variation>
    <location>
        <begin position="420"/>
        <end position="421"/>
    </location>
</feature>
<feature type="sequence conflict" description="In Ref. 3; AAH29888." evidence="7" ref="3">
    <original>RDG</original>
    <variation>HAA</variation>
    <location>
        <begin position="423"/>
        <end position="425"/>
    </location>
</feature>
<feature type="sequence conflict" description="In Ref. 3; AAH29888." evidence="7" ref="3">
    <original>C</original>
    <variation>F</variation>
    <location>
        <position position="439"/>
    </location>
</feature>
<feature type="sequence conflict" description="In Ref. 3; AAH29888." evidence="7" ref="3">
    <original>G</original>
    <variation>S</variation>
    <location>
        <position position="450"/>
    </location>
</feature>
<feature type="sequence conflict" description="In Ref. 3; AAH29888." evidence="7" ref="3">
    <original>S</original>
    <variation>F</variation>
    <location>
        <position position="615"/>
    </location>
</feature>
<comment type="interaction">
    <interactant intactId="EBI-719840">
        <id>Q96LX7</id>
    </interactant>
    <interactant intactId="EBI-618309">
        <id>Q08379</id>
        <label>GOLGA2</label>
    </interactant>
    <organismsDiffer>false</organismsDiffer>
    <experiments>3</experiments>
</comment>
<comment type="interaction">
    <interactant intactId="EBI-719840">
        <id>Q96LX7</id>
    </interactant>
    <interactant intactId="EBI-948001">
        <id>Q15323</id>
        <label>KRT31</label>
    </interactant>
    <organismsDiffer>false</organismsDiffer>
    <experiments>3</experiments>
</comment>
<comment type="interaction">
    <interactant intactId="EBI-719840">
        <id>Q96LX7</id>
    </interactant>
    <interactant intactId="EBI-742948">
        <id>Q5JR59</id>
        <label>MTUS2</label>
    </interactant>
    <organismsDiffer>false</organismsDiffer>
    <experiments>3</experiments>
</comment>
<comment type="interaction">
    <interactant intactId="EBI-12165781">
        <id>Q96LX7-5</id>
    </interactant>
    <interactant intactId="EBI-946046">
        <id>P54252</id>
        <label>ATXN3</label>
    </interactant>
    <organismsDiffer>false</organismsDiffer>
    <experiments>3</experiments>
</comment>
<comment type="interaction">
    <interactant intactId="EBI-12165781">
        <id>Q96LX7-5</id>
    </interactant>
    <interactant intactId="EBI-1050106">
        <id>O75934</id>
        <label>BCAS2</label>
    </interactant>
    <organismsDiffer>false</organismsDiffer>
    <experiments>3</experiments>
</comment>
<comment type="interaction">
    <interactant intactId="EBI-12165781">
        <id>Q96LX7-5</id>
    </interactant>
    <interactant intactId="EBI-3437878">
        <id>Q86T90</id>
        <label>KIAA1328</label>
    </interactant>
    <organismsDiffer>false</organismsDiffer>
    <experiments>3</experiments>
</comment>
<comment type="interaction">
    <interactant intactId="EBI-12165781">
        <id>Q96LX7-5</id>
    </interactant>
    <interactant intactId="EBI-10975473">
        <id>O60333-2</id>
        <label>KIF1B</label>
    </interactant>
    <organismsDiffer>false</organismsDiffer>
    <experiments>3</experiments>
</comment>
<comment type="interaction">
    <interactant intactId="EBI-12165781">
        <id>Q96LX7-5</id>
    </interactant>
    <interactant intactId="EBI-356410">
        <id>P08779</id>
        <label>KRT16</label>
    </interactant>
    <organismsDiffer>false</organismsDiffer>
    <experiments>3</experiments>
</comment>
<comment type="interaction">
    <interactant intactId="EBI-12165781">
        <id>Q96LX7-5</id>
    </interactant>
    <interactant intactId="EBI-1048945">
        <id>Q3LI72</id>
        <label>KRTAP19-5</label>
    </interactant>
    <organismsDiffer>false</organismsDiffer>
    <experiments>3</experiments>
</comment>
<comment type="interaction">
    <interactant intactId="EBI-12165781">
        <id>Q96LX7-5</id>
    </interactant>
    <interactant intactId="EBI-11962084">
        <id>Q3LI66</id>
        <label>KRTAP6-2</label>
    </interactant>
    <organismsDiffer>false</organismsDiffer>
    <experiments>3</experiments>
</comment>
<comment type="interaction">
    <interactant intactId="EBI-12165781">
        <id>Q96LX7-5</id>
    </interactant>
    <interactant intactId="EBI-10261141">
        <id>Q8IUC2</id>
        <label>KRTAP8-1</label>
    </interactant>
    <organismsDiffer>false</organismsDiffer>
    <experiments>3</experiments>
</comment>
<comment type="interaction">
    <interactant intactId="EBI-12165781">
        <id>Q96LX7-5</id>
    </interactant>
    <interactant intactId="EBI-2512055">
        <id>O15049</id>
        <label>N4BP3</label>
    </interactant>
    <organismsDiffer>false</organismsDiffer>
    <experiments>3</experiments>
</comment>
<comment type="interaction">
    <interactant intactId="EBI-12165781">
        <id>Q96LX7-5</id>
    </interactant>
    <interactant intactId="EBI-10178578">
        <id>I6L9F6</id>
        <label>NEFL</label>
    </interactant>
    <organismsDiffer>false</organismsDiffer>
    <experiments>3</experiments>
</comment>
<comment type="interaction">
    <interactant intactId="EBI-12165781">
        <id>Q96LX7-5</id>
    </interactant>
    <interactant intactId="EBI-749195">
        <id>P60891</id>
        <label>PRPS1</label>
    </interactant>
    <organismsDiffer>false</organismsDiffer>
    <experiments>3</experiments>
</comment>
<comment type="interaction">
    <interactant intactId="EBI-12165781">
        <id>Q96LX7-5</id>
    </interactant>
    <interactant intactId="EBI-720609">
        <id>O76024</id>
        <label>WFS1</label>
    </interactant>
    <organismsDiffer>false</organismsDiffer>
    <experiments>3</experiments>
</comment>
<comment type="alternative products">
    <event type="alternative splicing"/>
    <isoform>
        <id>Q96LX7-4</id>
        <name>1</name>
        <sequence type="displayed"/>
    </isoform>
    <isoform>
        <id>Q96LX7-5</id>
        <name>2</name>
        <sequence type="described" ref="VSP_039653"/>
    </isoform>
    <isoform>
        <id>Q96LX7-2</id>
        <name>3</name>
        <sequence type="described" ref="VSP_039651"/>
    </isoform>
    <isoform>
        <id>Q96LX7-3</id>
        <name>4</name>
        <sequence type="described" ref="VSP_039652"/>
    </isoform>
</comment>
<comment type="miscellaneous">
    <molecule>Isoform 3</molecule>
    <text evidence="7">May be produced at very low levels due to a premature stop codon in the mRNA, leading to nonsense-mediated mRNA decay.</text>
</comment>
<comment type="sequence caution" evidence="7">
    <conflict type="miscellaneous discrepancy">
        <sequence resource="EMBL-CDS" id="BAB71539"/>
    </conflict>
    <text>Incompletely spliced mRNA.</text>
</comment>
<accession>Q96LX7</accession>
<accession>A1A4Y7</accession>
<accession>B4DNX7</accession>
<accession>B4E1Q5</accession>
<accession>C9J8L2</accession>
<accession>Q0P683</accession>
<accession>Q5T629</accession>
<evidence type="ECO:0000255" key="1"/>
<evidence type="ECO:0000256" key="2">
    <source>
        <dbReference type="SAM" id="MobiDB-lite"/>
    </source>
</evidence>
<evidence type="ECO:0000269" key="3">
    <source>
    </source>
</evidence>
<evidence type="ECO:0000269" key="4">
    <source>
    </source>
</evidence>
<evidence type="ECO:0000303" key="5">
    <source>
    </source>
</evidence>
<evidence type="ECO:0000303" key="6">
    <source>
    </source>
</evidence>
<evidence type="ECO:0000305" key="7"/>
<dbReference type="EMBL" id="AK057646">
    <property type="protein sequence ID" value="BAB71539.1"/>
    <property type="status" value="ALT_SEQ"/>
    <property type="molecule type" value="mRNA"/>
</dbReference>
<dbReference type="EMBL" id="AK298104">
    <property type="protein sequence ID" value="BAG60389.1"/>
    <property type="molecule type" value="mRNA"/>
</dbReference>
<dbReference type="EMBL" id="AK303939">
    <property type="protein sequence ID" value="BAG64867.1"/>
    <property type="molecule type" value="mRNA"/>
</dbReference>
<dbReference type="EMBL" id="AL355480">
    <property type="status" value="NOT_ANNOTATED_CDS"/>
    <property type="molecule type" value="Genomic_DNA"/>
</dbReference>
<dbReference type="EMBL" id="BC029888">
    <property type="protein sequence ID" value="AAH29888.1"/>
    <property type="molecule type" value="mRNA"/>
</dbReference>
<dbReference type="EMBL" id="BC128177">
    <property type="protein sequence ID" value="AAI28178.1"/>
    <property type="molecule type" value="mRNA"/>
</dbReference>
<dbReference type="EMBL" id="BC128178">
    <property type="protein sequence ID" value="AAI28179.2"/>
    <property type="molecule type" value="mRNA"/>
</dbReference>
<dbReference type="CCDS" id="CCDS44131.2">
    <molecule id="Q96LX7-4"/>
</dbReference>
<dbReference type="CCDS" id="CCDS53314.1">
    <molecule id="Q96LX7-5"/>
</dbReference>
<dbReference type="RefSeq" id="NP_001108410.2">
    <molecule id="Q96LX7-4"/>
    <property type="nucleotide sequence ID" value="NM_001114938.3"/>
</dbReference>
<dbReference type="RefSeq" id="NP_001177111.1">
    <molecule id="Q96LX7-5"/>
    <property type="nucleotide sequence ID" value="NM_001190182.2"/>
</dbReference>
<dbReference type="SMR" id="Q96LX7"/>
<dbReference type="BioGRID" id="127219">
    <property type="interactions" value="12"/>
</dbReference>
<dbReference type="FunCoup" id="Q96LX7">
    <property type="interactions" value="2"/>
</dbReference>
<dbReference type="IntAct" id="Q96LX7">
    <property type="interactions" value="18"/>
</dbReference>
<dbReference type="STRING" id="9606.ENSP00000432172"/>
<dbReference type="CarbonylDB" id="Q96LX7"/>
<dbReference type="iPTMnet" id="Q96LX7"/>
<dbReference type="PhosphoSitePlus" id="Q96LX7"/>
<dbReference type="BioMuta" id="CCDC17"/>
<dbReference type="DMDM" id="302393684"/>
<dbReference type="MassIVE" id="Q96LX7"/>
<dbReference type="PaxDb" id="9606-ENSP00000432172"/>
<dbReference type="PeptideAtlas" id="Q96LX7"/>
<dbReference type="Antibodypedia" id="51288">
    <property type="antibodies" value="114 antibodies from 18 providers"/>
</dbReference>
<dbReference type="DNASU" id="149483"/>
<dbReference type="Ensembl" id="ENST00000421127.6">
    <molecule id="Q96LX7-5"/>
    <property type="protein sequence ID" value="ENSP00000389415.2"/>
    <property type="gene ID" value="ENSG00000159588.15"/>
</dbReference>
<dbReference type="Ensembl" id="ENST00000445048.2">
    <molecule id="Q96LX7-3"/>
    <property type="protein sequence ID" value="ENSP00000411335.2"/>
    <property type="gene ID" value="ENSG00000159588.15"/>
</dbReference>
<dbReference type="Ensembl" id="ENST00000528266.6">
    <molecule id="Q96LX7-4"/>
    <property type="protein sequence ID" value="ENSP00000432172.1"/>
    <property type="gene ID" value="ENSG00000159588.15"/>
</dbReference>
<dbReference type="GeneID" id="149483"/>
<dbReference type="KEGG" id="hsa:149483"/>
<dbReference type="MANE-Select" id="ENST00000528266.6">
    <property type="protein sequence ID" value="ENSP00000432172.1"/>
    <property type="RefSeq nucleotide sequence ID" value="NM_001114938.3"/>
    <property type="RefSeq protein sequence ID" value="NP_001108410.2"/>
</dbReference>
<dbReference type="UCSC" id="uc009vxz.4">
    <molecule id="Q96LX7-4"/>
    <property type="organism name" value="human"/>
</dbReference>
<dbReference type="AGR" id="HGNC:26574"/>
<dbReference type="CTD" id="149483"/>
<dbReference type="DisGeNET" id="149483"/>
<dbReference type="GeneCards" id="CCDC17"/>
<dbReference type="HGNC" id="HGNC:26574">
    <property type="gene designation" value="CCDC17"/>
</dbReference>
<dbReference type="HPA" id="ENSG00000159588">
    <property type="expression patterns" value="Tissue enriched (fallopian)"/>
</dbReference>
<dbReference type="neXtProt" id="NX_Q96LX7"/>
<dbReference type="OpenTargets" id="ENSG00000159588"/>
<dbReference type="VEuPathDB" id="HostDB:ENSG00000159588"/>
<dbReference type="eggNOG" id="ENOG502QR6M">
    <property type="taxonomic scope" value="Eukaryota"/>
</dbReference>
<dbReference type="GeneTree" id="ENSGT00390000006459"/>
<dbReference type="HOGENOM" id="CLU_040615_0_0_1"/>
<dbReference type="InParanoid" id="Q96LX7"/>
<dbReference type="OMA" id="ICELQAW"/>
<dbReference type="OrthoDB" id="289416at2759"/>
<dbReference type="PAN-GO" id="Q96LX7">
    <property type="GO annotations" value="0 GO annotations based on evolutionary models"/>
</dbReference>
<dbReference type="PhylomeDB" id="Q96LX7"/>
<dbReference type="TreeFam" id="TF335390"/>
<dbReference type="PathwayCommons" id="Q96LX7"/>
<dbReference type="SignaLink" id="Q96LX7"/>
<dbReference type="BioGRID-ORCS" id="149483">
    <property type="hits" value="26 hits in 1153 CRISPR screens"/>
</dbReference>
<dbReference type="GenomeRNAi" id="149483"/>
<dbReference type="Pharos" id="Q96LX7">
    <property type="development level" value="Tdark"/>
</dbReference>
<dbReference type="PRO" id="PR:Q96LX7"/>
<dbReference type="Proteomes" id="UP000005640">
    <property type="component" value="Chromosome 1"/>
</dbReference>
<dbReference type="RNAct" id="Q96LX7">
    <property type="molecule type" value="protein"/>
</dbReference>
<dbReference type="Bgee" id="ENSG00000159588">
    <property type="expression patterns" value="Expressed in right uterine tube and 103 other cell types or tissues"/>
</dbReference>
<dbReference type="ExpressionAtlas" id="Q96LX7">
    <property type="expression patterns" value="baseline and differential"/>
</dbReference>
<dbReference type="InterPro" id="IPR038800">
    <property type="entry name" value="CCDC17"/>
</dbReference>
<dbReference type="PANTHER" id="PTHR33820">
    <property type="entry name" value="COILED-COIL DOMAIN-CONTAINING PROTEIN 17"/>
    <property type="match status" value="1"/>
</dbReference>
<dbReference type="PANTHER" id="PTHR33820:SF4">
    <property type="entry name" value="COILED-COIL DOMAIN-CONTAINING PROTEIN 17"/>
    <property type="match status" value="1"/>
</dbReference>